<gene>
    <name type="primary">CYCD2-1</name>
    <name type="ordered locus">Os09g0382300</name>
    <name type="ordered locus">LOC_Os09g21450</name>
    <name type="ORF">P0505H05.23</name>
</gene>
<name>CCD21_ORYSJ</name>
<proteinExistence type="inferred from homology"/>
<organism>
    <name type="scientific">Oryza sativa subsp. japonica</name>
    <name type="common">Rice</name>
    <dbReference type="NCBI Taxonomy" id="39947"/>
    <lineage>
        <taxon>Eukaryota</taxon>
        <taxon>Viridiplantae</taxon>
        <taxon>Streptophyta</taxon>
        <taxon>Embryophyta</taxon>
        <taxon>Tracheophyta</taxon>
        <taxon>Spermatophyta</taxon>
        <taxon>Magnoliopsida</taxon>
        <taxon>Liliopsida</taxon>
        <taxon>Poales</taxon>
        <taxon>Poaceae</taxon>
        <taxon>BOP clade</taxon>
        <taxon>Oryzoideae</taxon>
        <taxon>Oryzeae</taxon>
        <taxon>Oryzinae</taxon>
        <taxon>Oryza</taxon>
        <taxon>Oryza sativa</taxon>
    </lineage>
</organism>
<sequence>MPADDDDASYLLCAEDAGAAVFDVAVDISTCTTEDDECCSVGGEELYSAASIAELIGGEAEYSPRSDYPDRLRSRSIDPAARAESVSWILKVQEYNGFLPLTAYLAVNYMDRFLSLRHLPEGQGWAMQLLAVACLSLAAKMEETLVPSLLDLQVECSRYVFEPRTICRMEFLILTALNWRLRSVTPFTFIDFFACKHISNAMVQNANSDIQFLDHCPSSMAAAAVLCATGETPSLAFVNPELAVNWCIGLAEEGISSCYQLMQQLVIGNVQRSAAAAAAVNLFSDEGLSYDSSSPPPPKRRKRSPPGT</sequence>
<evidence type="ECO:0000256" key="1">
    <source>
        <dbReference type="SAM" id="MobiDB-lite"/>
    </source>
</evidence>
<evidence type="ECO:0000305" key="2"/>
<dbReference type="EMBL" id="AP005312">
    <property type="protein sequence ID" value="BAD25836.1"/>
    <property type="status" value="ALT_SEQ"/>
    <property type="molecule type" value="Genomic_DNA"/>
</dbReference>
<dbReference type="EMBL" id="AP008215">
    <property type="protein sequence ID" value="BAF24977.2"/>
    <property type="status" value="ALT_SEQ"/>
    <property type="molecule type" value="Genomic_DNA"/>
</dbReference>
<dbReference type="EMBL" id="AP014965">
    <property type="protein sequence ID" value="BAT07863.1"/>
    <property type="molecule type" value="Genomic_DNA"/>
</dbReference>
<dbReference type="SMR" id="Q0J233"/>
<dbReference type="FunCoup" id="Q0J233">
    <property type="interactions" value="308"/>
</dbReference>
<dbReference type="STRING" id="39947.Q0J233"/>
<dbReference type="PaxDb" id="39947-Q0J233"/>
<dbReference type="EnsemblPlants" id="Os09t0382300-00">
    <property type="protein sequence ID" value="Os09t0382300-00"/>
    <property type="gene ID" value="Os09g0382300"/>
</dbReference>
<dbReference type="Gramene" id="Os09t0382300-00">
    <property type="protein sequence ID" value="Os09t0382300-00"/>
    <property type="gene ID" value="Os09g0382300"/>
</dbReference>
<dbReference type="KEGG" id="dosa:Os09g0382300"/>
<dbReference type="eggNOG" id="KOG0656">
    <property type="taxonomic scope" value="Eukaryota"/>
</dbReference>
<dbReference type="HOGENOM" id="CLU_048040_2_1_1"/>
<dbReference type="InParanoid" id="Q0J233"/>
<dbReference type="OMA" id="ATIRVIH"/>
<dbReference type="PlantReactome" id="R-OSA-9640760">
    <property type="pathway name" value="G1 phase"/>
</dbReference>
<dbReference type="PlantReactome" id="R-OSA-9640887">
    <property type="pathway name" value="G1/S transition"/>
</dbReference>
<dbReference type="Proteomes" id="UP000000763">
    <property type="component" value="Chromosome 9"/>
</dbReference>
<dbReference type="Proteomes" id="UP000059680">
    <property type="component" value="Chromosome 9"/>
</dbReference>
<dbReference type="GO" id="GO:0000307">
    <property type="term" value="C:cyclin-dependent protein kinase holoenzyme complex"/>
    <property type="evidence" value="ECO:0000318"/>
    <property type="project" value="GO_Central"/>
</dbReference>
<dbReference type="GO" id="GO:0005737">
    <property type="term" value="C:cytoplasm"/>
    <property type="evidence" value="ECO:0000318"/>
    <property type="project" value="GO_Central"/>
</dbReference>
<dbReference type="GO" id="GO:0005634">
    <property type="term" value="C:nucleus"/>
    <property type="evidence" value="ECO:0000318"/>
    <property type="project" value="GO_Central"/>
</dbReference>
<dbReference type="GO" id="GO:0016538">
    <property type="term" value="F:cyclin-dependent protein serine/threonine kinase regulator activity"/>
    <property type="evidence" value="ECO:0000318"/>
    <property type="project" value="GO_Central"/>
</dbReference>
<dbReference type="GO" id="GO:0051301">
    <property type="term" value="P:cell division"/>
    <property type="evidence" value="ECO:0007669"/>
    <property type="project" value="UniProtKB-KW"/>
</dbReference>
<dbReference type="GO" id="GO:0000082">
    <property type="term" value="P:G1/S transition of mitotic cell cycle"/>
    <property type="evidence" value="ECO:0000318"/>
    <property type="project" value="GO_Central"/>
</dbReference>
<dbReference type="CDD" id="cd20543">
    <property type="entry name" value="CYCLIN_AtCycD-like_rpt1"/>
    <property type="match status" value="1"/>
</dbReference>
<dbReference type="CDD" id="cd20544">
    <property type="entry name" value="CYCLIN_AtCycD-like_rpt2"/>
    <property type="match status" value="1"/>
</dbReference>
<dbReference type="FunFam" id="1.10.472.10:FF:000034">
    <property type="entry name" value="D2/4-type cyclin"/>
    <property type="match status" value="1"/>
</dbReference>
<dbReference type="Gene3D" id="1.10.472.10">
    <property type="entry name" value="Cyclin-like"/>
    <property type="match status" value="2"/>
</dbReference>
<dbReference type="InterPro" id="IPR039361">
    <property type="entry name" value="Cyclin"/>
</dbReference>
<dbReference type="InterPro" id="IPR013763">
    <property type="entry name" value="Cyclin-like_dom"/>
</dbReference>
<dbReference type="InterPro" id="IPR036915">
    <property type="entry name" value="Cyclin-like_sf"/>
</dbReference>
<dbReference type="InterPro" id="IPR004367">
    <property type="entry name" value="Cyclin_C-dom"/>
</dbReference>
<dbReference type="InterPro" id="IPR006671">
    <property type="entry name" value="Cyclin_N"/>
</dbReference>
<dbReference type="InterPro" id="IPR048258">
    <property type="entry name" value="Cyclins_cyclin-box"/>
</dbReference>
<dbReference type="PANTHER" id="PTHR10177">
    <property type="entry name" value="CYCLINS"/>
    <property type="match status" value="1"/>
</dbReference>
<dbReference type="Pfam" id="PF02984">
    <property type="entry name" value="Cyclin_C"/>
    <property type="match status" value="1"/>
</dbReference>
<dbReference type="Pfam" id="PF00134">
    <property type="entry name" value="Cyclin_N"/>
    <property type="match status" value="1"/>
</dbReference>
<dbReference type="SMART" id="SM00385">
    <property type="entry name" value="CYCLIN"/>
    <property type="match status" value="1"/>
</dbReference>
<dbReference type="SMART" id="SM01332">
    <property type="entry name" value="Cyclin_C"/>
    <property type="match status" value="1"/>
</dbReference>
<dbReference type="SUPFAM" id="SSF47954">
    <property type="entry name" value="Cyclin-like"/>
    <property type="match status" value="2"/>
</dbReference>
<dbReference type="PROSITE" id="PS00292">
    <property type="entry name" value="CYCLINS"/>
    <property type="match status" value="1"/>
</dbReference>
<feature type="chain" id="PRO_0000287022" description="Cyclin-D2-1">
    <location>
        <begin position="1"/>
        <end position="308"/>
    </location>
</feature>
<feature type="region of interest" description="Disordered" evidence="1">
    <location>
        <begin position="286"/>
        <end position="308"/>
    </location>
</feature>
<feature type="compositionally biased region" description="Basic residues" evidence="1">
    <location>
        <begin position="298"/>
        <end position="308"/>
    </location>
</feature>
<comment type="similarity">
    <text evidence="2">Belongs to the cyclin family. Cyclin D subfamily.</text>
</comment>
<comment type="sequence caution" evidence="2">
    <conflict type="erroneous gene model prediction">
        <sequence resource="EMBL-CDS" id="BAD25836"/>
    </conflict>
</comment>
<comment type="sequence caution" evidence="2">
    <conflict type="erroneous gene model prediction">
        <sequence resource="EMBL-CDS" id="BAF24977"/>
    </conflict>
</comment>
<reference key="1">
    <citation type="journal article" date="2005" name="Nature">
        <title>The map-based sequence of the rice genome.</title>
        <authorList>
            <consortium name="International rice genome sequencing project (IRGSP)"/>
        </authorList>
    </citation>
    <scope>NUCLEOTIDE SEQUENCE [LARGE SCALE GENOMIC DNA]</scope>
    <source>
        <strain>cv. Nipponbare</strain>
    </source>
</reference>
<reference key="2">
    <citation type="journal article" date="2008" name="Nucleic Acids Res.">
        <title>The rice annotation project database (RAP-DB): 2008 update.</title>
        <authorList>
            <consortium name="The rice annotation project (RAP)"/>
        </authorList>
    </citation>
    <scope>GENOME REANNOTATION</scope>
    <source>
        <strain>cv. Nipponbare</strain>
    </source>
</reference>
<reference key="3">
    <citation type="journal article" date="2013" name="Rice">
        <title>Improvement of the Oryza sativa Nipponbare reference genome using next generation sequence and optical map data.</title>
        <authorList>
            <person name="Kawahara Y."/>
            <person name="de la Bastide M."/>
            <person name="Hamilton J.P."/>
            <person name="Kanamori H."/>
            <person name="McCombie W.R."/>
            <person name="Ouyang S."/>
            <person name="Schwartz D.C."/>
            <person name="Tanaka T."/>
            <person name="Wu J."/>
            <person name="Zhou S."/>
            <person name="Childs K.L."/>
            <person name="Davidson R.M."/>
            <person name="Lin H."/>
            <person name="Quesada-Ocampo L."/>
            <person name="Vaillancourt B."/>
            <person name="Sakai H."/>
            <person name="Lee S.S."/>
            <person name="Kim J."/>
            <person name="Numa H."/>
            <person name="Itoh T."/>
            <person name="Buell C.R."/>
            <person name="Matsumoto T."/>
        </authorList>
    </citation>
    <scope>GENOME REANNOTATION</scope>
    <source>
        <strain>cv. Nipponbare</strain>
    </source>
</reference>
<reference key="4">
    <citation type="journal article" date="2006" name="Mol. Genet. Genomics">
        <title>Genome-wide analysis of cyclin family in rice (Oryza sativa L.).</title>
        <authorList>
            <person name="La H."/>
            <person name="Li J."/>
            <person name="Ji Z."/>
            <person name="Cheng Y."/>
            <person name="Li X."/>
            <person name="Jiang S."/>
            <person name="Venkatesh P.N."/>
            <person name="Ramachandran S."/>
        </authorList>
    </citation>
    <scope>GENE FAMILY</scope>
    <scope>NOMENCLATURE</scope>
</reference>
<protein>
    <recommendedName>
        <fullName>Cyclin-D2-1</fullName>
    </recommendedName>
    <alternativeName>
        <fullName>G1/S-specific cyclin-D2-1</fullName>
        <shortName>CycD2;1</shortName>
    </alternativeName>
</protein>
<keyword id="KW-0131">Cell cycle</keyword>
<keyword id="KW-0132">Cell division</keyword>
<keyword id="KW-0195">Cyclin</keyword>
<keyword id="KW-1185">Reference proteome</keyword>
<accession>Q0J233</accession>
<accession>A0A0P0XLX6</accession>
<accession>Q6H613</accession>